<evidence type="ECO:0000250" key="1">
    <source>
        <dbReference type="UniProtKB" id="P03901"/>
    </source>
</evidence>
<evidence type="ECO:0000250" key="2">
    <source>
        <dbReference type="UniProtKB" id="P03902"/>
    </source>
</evidence>
<evidence type="ECO:0000255" key="3"/>
<evidence type="ECO:0000305" key="4"/>
<comment type="function">
    <text evidence="1">Core subunit of the mitochondrial membrane respiratory chain NADH dehydrogenase (Complex I) which catalyzes electron transfer from NADH through the respiratory chain, using ubiquinone as an electron acceptor. Part of the enzyme membrane arm which is embedded in the lipid bilayer and involved in proton translocation.</text>
</comment>
<comment type="catalytic activity">
    <reaction evidence="1">
        <text>a ubiquinone + NADH + 5 H(+)(in) = a ubiquinol + NAD(+) + 4 H(+)(out)</text>
        <dbReference type="Rhea" id="RHEA:29091"/>
        <dbReference type="Rhea" id="RHEA-COMP:9565"/>
        <dbReference type="Rhea" id="RHEA-COMP:9566"/>
        <dbReference type="ChEBI" id="CHEBI:15378"/>
        <dbReference type="ChEBI" id="CHEBI:16389"/>
        <dbReference type="ChEBI" id="CHEBI:17976"/>
        <dbReference type="ChEBI" id="CHEBI:57540"/>
        <dbReference type="ChEBI" id="CHEBI:57945"/>
        <dbReference type="EC" id="7.1.1.2"/>
    </reaction>
    <physiologicalReaction direction="left-to-right" evidence="1">
        <dbReference type="Rhea" id="RHEA:29092"/>
    </physiologicalReaction>
</comment>
<comment type="subunit">
    <text evidence="2">Core subunit of respiratory chain NADH dehydrogenase (Complex I) which is composed of 45 different subunits.</text>
</comment>
<comment type="subcellular location">
    <subcellularLocation>
        <location evidence="2">Mitochondrion inner membrane</location>
        <topology evidence="3">Multi-pass membrane protein</topology>
    </subcellularLocation>
</comment>
<comment type="similarity">
    <text evidence="4">Belongs to the complex I subunit 4L family.</text>
</comment>
<gene>
    <name type="primary">MT-ND4L</name>
    <name type="synonym">MTND4L</name>
    <name type="synonym">NADH4L</name>
    <name type="synonym">ND4L</name>
</gene>
<accession>Q1HUY4</accession>
<protein>
    <recommendedName>
        <fullName>NADH-ubiquinone oxidoreductase chain 4L</fullName>
        <ecNumber>7.1.1.2</ecNumber>
    </recommendedName>
    <alternativeName>
        <fullName>NADH dehydrogenase subunit 4L</fullName>
    </alternativeName>
</protein>
<proteinExistence type="inferred from homology"/>
<geneLocation type="mitochondrion"/>
<dbReference type="EC" id="7.1.1.2"/>
<dbReference type="EMBL" id="DQ312384">
    <property type="protein sequence ID" value="ABC47568.1"/>
    <property type="molecule type" value="Genomic_DNA"/>
</dbReference>
<dbReference type="EMBL" id="DQ312385">
    <property type="protein sequence ID" value="ABC47571.1"/>
    <property type="molecule type" value="Genomic_DNA"/>
</dbReference>
<dbReference type="EMBL" id="DQ312386">
    <property type="protein sequence ID" value="ABC47574.1"/>
    <property type="molecule type" value="Genomic_DNA"/>
</dbReference>
<dbReference type="EMBL" id="DQ312387">
    <property type="protein sequence ID" value="ABC47577.1"/>
    <property type="molecule type" value="Genomic_DNA"/>
</dbReference>
<dbReference type="SMR" id="Q1HUY4"/>
<dbReference type="GO" id="GO:0005743">
    <property type="term" value="C:mitochondrial inner membrane"/>
    <property type="evidence" value="ECO:0000250"/>
    <property type="project" value="UniProtKB"/>
</dbReference>
<dbReference type="GO" id="GO:0045271">
    <property type="term" value="C:respiratory chain complex I"/>
    <property type="evidence" value="ECO:0000250"/>
    <property type="project" value="UniProtKB"/>
</dbReference>
<dbReference type="GO" id="GO:0008137">
    <property type="term" value="F:NADH dehydrogenase (ubiquinone) activity"/>
    <property type="evidence" value="ECO:0000250"/>
    <property type="project" value="UniProtKB"/>
</dbReference>
<dbReference type="GO" id="GO:0042773">
    <property type="term" value="P:ATP synthesis coupled electron transport"/>
    <property type="evidence" value="ECO:0007669"/>
    <property type="project" value="InterPro"/>
</dbReference>
<dbReference type="FunFam" id="1.10.287.3510:FF:000002">
    <property type="entry name" value="NADH-ubiquinone oxidoreductase chain 4L"/>
    <property type="match status" value="1"/>
</dbReference>
<dbReference type="Gene3D" id="1.10.287.3510">
    <property type="match status" value="1"/>
</dbReference>
<dbReference type="InterPro" id="IPR001133">
    <property type="entry name" value="NADH_UbQ_OxRdtase_chain4L/K"/>
</dbReference>
<dbReference type="InterPro" id="IPR039428">
    <property type="entry name" value="NUOK/Mnh_C1-like"/>
</dbReference>
<dbReference type="PANTHER" id="PTHR11434:SF0">
    <property type="entry name" value="NADH-UBIQUINONE OXIDOREDUCTASE CHAIN 4L"/>
    <property type="match status" value="1"/>
</dbReference>
<dbReference type="PANTHER" id="PTHR11434">
    <property type="entry name" value="NADH-UBIQUINONE OXIDOREDUCTASE SUBUNIT ND4L"/>
    <property type="match status" value="1"/>
</dbReference>
<dbReference type="Pfam" id="PF00420">
    <property type="entry name" value="Oxidored_q2"/>
    <property type="match status" value="1"/>
</dbReference>
<name>NU4LM_MESMC</name>
<sequence>MSITYMNMFMAFTISLLGLLMYRSHMMSSLLCLEGMMLSLFVMMTMAILNTHLTLASMIPIILLVFAACEAALGLSLLVMVSTTYGMDYVQNLNLLQC</sequence>
<keyword id="KW-0249">Electron transport</keyword>
<keyword id="KW-0472">Membrane</keyword>
<keyword id="KW-0496">Mitochondrion</keyword>
<keyword id="KW-0999">Mitochondrion inner membrane</keyword>
<keyword id="KW-0520">NAD</keyword>
<keyword id="KW-0679">Respiratory chain</keyword>
<keyword id="KW-1278">Translocase</keyword>
<keyword id="KW-0812">Transmembrane</keyword>
<keyword id="KW-1133">Transmembrane helix</keyword>
<keyword id="KW-0813">Transport</keyword>
<keyword id="KW-0830">Ubiquinone</keyword>
<reference key="1">
    <citation type="journal article" date="2006" name="Mol. Phylogenet. Evol.">
        <title>Molecular systematics of Vampyressine bats (Phyllostomidae: Stenodermatinae) with comparison of direct and indirect surveys of mitochondrial DNA variation.</title>
        <authorList>
            <person name="Hoofer S.R."/>
            <person name="Baker R.J."/>
        </authorList>
    </citation>
    <scope>NUCLEOTIDE SEQUENCE [GENOMIC DNA]</scope>
</reference>
<feature type="chain" id="PRO_0000275055" description="NADH-ubiquinone oxidoreductase chain 4L">
    <location>
        <begin position="1"/>
        <end position="98"/>
    </location>
</feature>
<feature type="transmembrane region" description="Helical" evidence="3">
    <location>
        <begin position="1"/>
        <end position="21"/>
    </location>
</feature>
<feature type="transmembrane region" description="Helical" evidence="3">
    <location>
        <begin position="29"/>
        <end position="49"/>
    </location>
</feature>
<feature type="transmembrane region" description="Helical" evidence="3">
    <location>
        <begin position="61"/>
        <end position="81"/>
    </location>
</feature>
<organism>
    <name type="scientific">Mesophylla macconnelli</name>
    <name type="common">MacConnell's bat</name>
    <name type="synonym">Ectophylla macconnelli</name>
    <dbReference type="NCBI Taxonomy" id="148094"/>
    <lineage>
        <taxon>Eukaryota</taxon>
        <taxon>Metazoa</taxon>
        <taxon>Chordata</taxon>
        <taxon>Craniata</taxon>
        <taxon>Vertebrata</taxon>
        <taxon>Euteleostomi</taxon>
        <taxon>Mammalia</taxon>
        <taxon>Eutheria</taxon>
        <taxon>Laurasiatheria</taxon>
        <taxon>Chiroptera</taxon>
        <taxon>Yangochiroptera</taxon>
        <taxon>Phyllostomidae</taxon>
        <taxon>Stenodermatinae</taxon>
        <taxon>Mesophylla</taxon>
    </lineage>
</organism>